<accession>A8IAR6</accession>
<gene>
    <name evidence="1" type="primary">rpsS</name>
    <name type="ordered locus">AZC_2550</name>
</gene>
<feature type="chain" id="PRO_1000072505" description="Small ribosomal subunit protein uS19">
    <location>
        <begin position="1"/>
        <end position="92"/>
    </location>
</feature>
<dbReference type="EMBL" id="AP009384">
    <property type="protein sequence ID" value="BAF88548.1"/>
    <property type="molecule type" value="Genomic_DNA"/>
</dbReference>
<dbReference type="RefSeq" id="WP_012171076.1">
    <property type="nucleotide sequence ID" value="NC_009937.1"/>
</dbReference>
<dbReference type="SMR" id="A8IAR6"/>
<dbReference type="STRING" id="438753.AZC_2550"/>
<dbReference type="KEGG" id="azc:AZC_2550"/>
<dbReference type="eggNOG" id="COG0185">
    <property type="taxonomic scope" value="Bacteria"/>
</dbReference>
<dbReference type="HOGENOM" id="CLU_144911_0_1_5"/>
<dbReference type="Proteomes" id="UP000000270">
    <property type="component" value="Chromosome"/>
</dbReference>
<dbReference type="GO" id="GO:0005737">
    <property type="term" value="C:cytoplasm"/>
    <property type="evidence" value="ECO:0007669"/>
    <property type="project" value="UniProtKB-ARBA"/>
</dbReference>
<dbReference type="GO" id="GO:0015935">
    <property type="term" value="C:small ribosomal subunit"/>
    <property type="evidence" value="ECO:0007669"/>
    <property type="project" value="InterPro"/>
</dbReference>
<dbReference type="GO" id="GO:0019843">
    <property type="term" value="F:rRNA binding"/>
    <property type="evidence" value="ECO:0007669"/>
    <property type="project" value="UniProtKB-UniRule"/>
</dbReference>
<dbReference type="GO" id="GO:0003735">
    <property type="term" value="F:structural constituent of ribosome"/>
    <property type="evidence" value="ECO:0007669"/>
    <property type="project" value="InterPro"/>
</dbReference>
<dbReference type="GO" id="GO:0000028">
    <property type="term" value="P:ribosomal small subunit assembly"/>
    <property type="evidence" value="ECO:0007669"/>
    <property type="project" value="TreeGrafter"/>
</dbReference>
<dbReference type="GO" id="GO:0006412">
    <property type="term" value="P:translation"/>
    <property type="evidence" value="ECO:0007669"/>
    <property type="project" value="UniProtKB-UniRule"/>
</dbReference>
<dbReference type="FunFam" id="3.30.860.10:FF:000001">
    <property type="entry name" value="30S ribosomal protein S19"/>
    <property type="match status" value="1"/>
</dbReference>
<dbReference type="Gene3D" id="3.30.860.10">
    <property type="entry name" value="30s Ribosomal Protein S19, Chain A"/>
    <property type="match status" value="1"/>
</dbReference>
<dbReference type="HAMAP" id="MF_00531">
    <property type="entry name" value="Ribosomal_uS19"/>
    <property type="match status" value="1"/>
</dbReference>
<dbReference type="InterPro" id="IPR002222">
    <property type="entry name" value="Ribosomal_uS19"/>
</dbReference>
<dbReference type="InterPro" id="IPR005732">
    <property type="entry name" value="Ribosomal_uS19_bac-type"/>
</dbReference>
<dbReference type="InterPro" id="IPR023575">
    <property type="entry name" value="Ribosomal_uS19_SF"/>
</dbReference>
<dbReference type="NCBIfam" id="TIGR01050">
    <property type="entry name" value="rpsS_bact"/>
    <property type="match status" value="1"/>
</dbReference>
<dbReference type="PANTHER" id="PTHR11880">
    <property type="entry name" value="RIBOSOMAL PROTEIN S19P FAMILY MEMBER"/>
    <property type="match status" value="1"/>
</dbReference>
<dbReference type="PANTHER" id="PTHR11880:SF8">
    <property type="entry name" value="SMALL RIBOSOMAL SUBUNIT PROTEIN US19M"/>
    <property type="match status" value="1"/>
</dbReference>
<dbReference type="Pfam" id="PF00203">
    <property type="entry name" value="Ribosomal_S19"/>
    <property type="match status" value="1"/>
</dbReference>
<dbReference type="PIRSF" id="PIRSF002144">
    <property type="entry name" value="Ribosomal_S19"/>
    <property type="match status" value="1"/>
</dbReference>
<dbReference type="PRINTS" id="PR00975">
    <property type="entry name" value="RIBOSOMALS19"/>
</dbReference>
<dbReference type="SUPFAM" id="SSF54570">
    <property type="entry name" value="Ribosomal protein S19"/>
    <property type="match status" value="1"/>
</dbReference>
<name>RS19_AZOC5</name>
<evidence type="ECO:0000255" key="1">
    <source>
        <dbReference type="HAMAP-Rule" id="MF_00531"/>
    </source>
</evidence>
<evidence type="ECO:0000305" key="2"/>
<reference key="1">
    <citation type="submission" date="2007-04" db="EMBL/GenBank/DDBJ databases">
        <title>Complete genome sequence of the nitrogen-fixing bacterium Azorhizobium caulinodans ORS571.</title>
        <authorList>
            <person name="Lee K.B."/>
            <person name="Backer P.D."/>
            <person name="Aono T."/>
            <person name="Liu C.T."/>
            <person name="Suzuki S."/>
            <person name="Suzuki T."/>
            <person name="Kaneko T."/>
            <person name="Yamada M."/>
            <person name="Tabata S."/>
            <person name="Kupfer D.M."/>
            <person name="Najar F.Z."/>
            <person name="Wiley G.B."/>
            <person name="Roe B."/>
            <person name="Binnewies T."/>
            <person name="Ussery D."/>
            <person name="Vereecke D."/>
            <person name="Gevers D."/>
            <person name="Holsters M."/>
            <person name="Oyaizu H."/>
        </authorList>
    </citation>
    <scope>NUCLEOTIDE SEQUENCE [LARGE SCALE GENOMIC DNA]</scope>
    <source>
        <strain>ATCC 43989 / DSM 5975 / JCM 20966 / LMG 6465 / NBRC 14845 / NCIMB 13405 / ORS 571</strain>
    </source>
</reference>
<comment type="function">
    <text evidence="1">Protein S19 forms a complex with S13 that binds strongly to the 16S ribosomal RNA.</text>
</comment>
<comment type="similarity">
    <text evidence="1">Belongs to the universal ribosomal protein uS19 family.</text>
</comment>
<organism>
    <name type="scientific">Azorhizobium caulinodans (strain ATCC 43989 / DSM 5975 / JCM 20966 / LMG 6465 / NBRC 14845 / NCIMB 13405 / ORS 571)</name>
    <dbReference type="NCBI Taxonomy" id="438753"/>
    <lineage>
        <taxon>Bacteria</taxon>
        <taxon>Pseudomonadati</taxon>
        <taxon>Pseudomonadota</taxon>
        <taxon>Alphaproteobacteria</taxon>
        <taxon>Hyphomicrobiales</taxon>
        <taxon>Xanthobacteraceae</taxon>
        <taxon>Azorhizobium</taxon>
    </lineage>
</organism>
<sequence length="92" mass="10424">MSRSIWKGPFVDGYLLKKADAARASGRNETIKIWSRRSTILPQFVGLTFGVYNGAKHVPVYVSEDMVGHKFGEFSPTRTYYGHAADKKSKRR</sequence>
<protein>
    <recommendedName>
        <fullName evidence="1">Small ribosomal subunit protein uS19</fullName>
    </recommendedName>
    <alternativeName>
        <fullName evidence="2">30S ribosomal protein S19</fullName>
    </alternativeName>
</protein>
<keyword id="KW-1185">Reference proteome</keyword>
<keyword id="KW-0687">Ribonucleoprotein</keyword>
<keyword id="KW-0689">Ribosomal protein</keyword>
<keyword id="KW-0694">RNA-binding</keyword>
<keyword id="KW-0699">rRNA-binding</keyword>
<proteinExistence type="inferred from homology"/>